<comment type="function">
    <text evidence="1">Functions in the biosynthesis of the anionic phospholipids phosphatidylglycerol and cardiolipin.</text>
</comment>
<comment type="catalytic activity">
    <reaction>
        <text>a CDP-1,2-diacyl-sn-glycerol + sn-glycerol 3-phosphate = a 1,2-diacyl-sn-glycero-3-phospho-(1'-sn-glycero-3'-phosphate) + CMP + H(+)</text>
        <dbReference type="Rhea" id="RHEA:12593"/>
        <dbReference type="ChEBI" id="CHEBI:15378"/>
        <dbReference type="ChEBI" id="CHEBI:57597"/>
        <dbReference type="ChEBI" id="CHEBI:58332"/>
        <dbReference type="ChEBI" id="CHEBI:60110"/>
        <dbReference type="ChEBI" id="CHEBI:60377"/>
        <dbReference type="EC" id="2.7.8.5"/>
    </reaction>
</comment>
<comment type="activity regulation">
    <text evidence="1">Activated by calcium and magnesium and inhibited by other bivalent cations.</text>
</comment>
<comment type="pathway">
    <text>Phospholipid metabolism; phosphatidylglycerol biosynthesis; phosphatidylglycerol from CDP-diacylglycerol: step 1/2.</text>
</comment>
<comment type="subcellular location">
    <subcellularLocation>
        <location evidence="1">Mitochondrion</location>
    </subcellularLocation>
</comment>
<comment type="similarity">
    <text evidence="5">Belongs to the CDP-alcohol phosphatidyltransferase class-II family.</text>
</comment>
<feature type="transit peptide" description="Mitochondrion" evidence="3">
    <location>
        <begin position="1"/>
        <end position="28"/>
    </location>
</feature>
<feature type="chain" id="PRO_0000337108" description="CDP-diacylglycerol--glycerol-3-phosphate 3-phosphatidyltransferase, mitochondrial">
    <location>
        <begin position="29"/>
        <end position="556"/>
    </location>
</feature>
<feature type="domain" description="PLD phosphodiesterase 1" evidence="4">
    <location>
        <begin position="215"/>
        <end position="241"/>
    </location>
</feature>
<feature type="domain" description="PLD phosphodiesterase 2" evidence="4">
    <location>
        <begin position="460"/>
        <end position="493"/>
    </location>
</feature>
<feature type="active site" evidence="4">
    <location>
        <position position="220"/>
    </location>
</feature>
<feature type="active site" evidence="4">
    <location>
        <position position="222"/>
    </location>
</feature>
<feature type="active site" evidence="4">
    <location>
        <position position="227"/>
    </location>
</feature>
<feature type="binding site" evidence="3">
    <location>
        <begin position="124"/>
        <end position="131"/>
    </location>
    <ligand>
        <name>ATP</name>
        <dbReference type="ChEBI" id="CHEBI:30616"/>
    </ligand>
</feature>
<feature type="modified residue" description="Phosphoserine" evidence="2">
    <location>
        <position position="49"/>
    </location>
</feature>
<protein>
    <recommendedName>
        <fullName>CDP-diacylglycerol--glycerol-3-phosphate 3-phosphatidyltransferase, mitochondrial</fullName>
        <ecNumber>2.7.8.5</ecNumber>
    </recommendedName>
    <alternativeName>
        <fullName>Phosphatidylglycerophosphate synthase 1</fullName>
        <shortName>PGP synthase 1</shortName>
    </alternativeName>
</protein>
<organism>
    <name type="scientific">Pongo abelii</name>
    <name type="common">Sumatran orangutan</name>
    <name type="synonym">Pongo pygmaeus abelii</name>
    <dbReference type="NCBI Taxonomy" id="9601"/>
    <lineage>
        <taxon>Eukaryota</taxon>
        <taxon>Metazoa</taxon>
        <taxon>Chordata</taxon>
        <taxon>Craniata</taxon>
        <taxon>Vertebrata</taxon>
        <taxon>Euteleostomi</taxon>
        <taxon>Mammalia</taxon>
        <taxon>Eutheria</taxon>
        <taxon>Euarchontoglires</taxon>
        <taxon>Primates</taxon>
        <taxon>Haplorrhini</taxon>
        <taxon>Catarrhini</taxon>
        <taxon>Hominidae</taxon>
        <taxon>Pongo</taxon>
    </lineage>
</organism>
<proteinExistence type="evidence at transcript level"/>
<evidence type="ECO:0000250" key="1"/>
<evidence type="ECO:0000250" key="2">
    <source>
        <dbReference type="UniProtKB" id="Q8BHF7"/>
    </source>
</evidence>
<evidence type="ECO:0000255" key="3"/>
<evidence type="ECO:0000255" key="4">
    <source>
        <dbReference type="PROSITE-ProRule" id="PRU00153"/>
    </source>
</evidence>
<evidence type="ECO:0000305" key="5"/>
<accession>Q5R8K7</accession>
<sequence>MAVAAAAAAGPVFWRRLLGLLPGRPGLAALLGRLSDRLGRNRDRQRRRSPWLLLAPLLSPAVPQVTSPPCCLCPEGVHRFQWIRNLVPEFGVSSSHVRVLSSPAESFELMKGQIRVAKRRVVMASLYLGTGPLEQELVDCLESTLEKSLQAKFPSNLKVSILLDFTRGSRGRKNSRTMLLPLPQRFPEQVRVSLFHTPHLRGLLRLLIPERFNETIGLQHIKVYLFDNSVILSGANLSDSYFTNRQDRYVFLQDCAEIADFFTELVDAVGDVSLQLQGDDTVQVVDGMVHPYKGDRTEYCKAANKRVMDVINSARTRQQMLHAQTFHSNSLLTQEDAAAAGDRRPAPDTWIYPLIQMKPFEIQIDEIVTETLLTEAERGAKVYLTTGYFNLTQAYMDLVLGTRAEYQILLASPEVNGFFGAKGVVGAIPAAYVHIERQFYSEVCSLGQQERVQLQEYWRRGWTFHAKGLWLYLAGSSLPCLTLIGSPNFGYRSVHRDLEAQIAIVTENEALQQQLHQEQEQLYLRSGVVSSATFEQPSRQVKLWVKMVTPLIKNFF</sequence>
<reference key="1">
    <citation type="submission" date="2004-11" db="EMBL/GenBank/DDBJ databases">
        <authorList>
            <consortium name="The German cDNA consortium"/>
        </authorList>
    </citation>
    <scope>NUCLEOTIDE SEQUENCE [LARGE SCALE MRNA]</scope>
    <source>
        <tissue>Kidney</tissue>
    </source>
</reference>
<keyword id="KW-0067">ATP-binding</keyword>
<keyword id="KW-0444">Lipid biosynthesis</keyword>
<keyword id="KW-0443">Lipid metabolism</keyword>
<keyword id="KW-0496">Mitochondrion</keyword>
<keyword id="KW-0547">Nucleotide-binding</keyword>
<keyword id="KW-0594">Phospholipid biosynthesis</keyword>
<keyword id="KW-1208">Phospholipid metabolism</keyword>
<keyword id="KW-0597">Phosphoprotein</keyword>
<keyword id="KW-1185">Reference proteome</keyword>
<keyword id="KW-0677">Repeat</keyword>
<keyword id="KW-0808">Transferase</keyword>
<keyword id="KW-0809">Transit peptide</keyword>
<gene>
    <name type="primary">PGS1</name>
</gene>
<dbReference type="EC" id="2.7.8.5"/>
<dbReference type="EMBL" id="CR859745">
    <property type="protein sequence ID" value="CAH91903.1"/>
    <property type="molecule type" value="mRNA"/>
</dbReference>
<dbReference type="RefSeq" id="NP_001126101.1">
    <property type="nucleotide sequence ID" value="NM_001132629.1"/>
</dbReference>
<dbReference type="SMR" id="Q5R8K7"/>
<dbReference type="STRING" id="9601.ENSPPYP00000009757"/>
<dbReference type="GeneID" id="100173056"/>
<dbReference type="KEGG" id="pon:100173056"/>
<dbReference type="CTD" id="9489"/>
<dbReference type="eggNOG" id="KOG3964">
    <property type="taxonomic scope" value="Eukaryota"/>
</dbReference>
<dbReference type="InParanoid" id="Q5R8K7"/>
<dbReference type="OrthoDB" id="10250191at2759"/>
<dbReference type="UniPathway" id="UPA00084">
    <property type="reaction ID" value="UER00503"/>
</dbReference>
<dbReference type="Proteomes" id="UP000001595">
    <property type="component" value="Unplaced"/>
</dbReference>
<dbReference type="GO" id="GO:0005739">
    <property type="term" value="C:mitochondrion"/>
    <property type="evidence" value="ECO:0007669"/>
    <property type="project" value="UniProtKB-SubCell"/>
</dbReference>
<dbReference type="GO" id="GO:0005524">
    <property type="term" value="F:ATP binding"/>
    <property type="evidence" value="ECO:0007669"/>
    <property type="project" value="UniProtKB-KW"/>
</dbReference>
<dbReference type="GO" id="GO:0008444">
    <property type="term" value="F:CDP-diacylglycerol-glycerol-3-phosphate 3-phosphatidyltransferase activity"/>
    <property type="evidence" value="ECO:0007669"/>
    <property type="project" value="UniProtKB-EC"/>
</dbReference>
<dbReference type="GO" id="GO:0032049">
    <property type="term" value="P:cardiolipin biosynthetic process"/>
    <property type="evidence" value="ECO:0007669"/>
    <property type="project" value="InterPro"/>
</dbReference>
<dbReference type="CDD" id="cd09135">
    <property type="entry name" value="PLDc_PGS1_euk_1"/>
    <property type="match status" value="1"/>
</dbReference>
<dbReference type="CDD" id="cd09137">
    <property type="entry name" value="PLDc_PGS1_euk_2"/>
    <property type="match status" value="1"/>
</dbReference>
<dbReference type="FunFam" id="3.30.870.10:FF:000023">
    <property type="entry name" value="CDP-diacylglycerol--glycerol-3-phosphate 3-phosphatidyltransferase"/>
    <property type="match status" value="1"/>
</dbReference>
<dbReference type="FunFam" id="3.30.870.10:FF:000026">
    <property type="entry name" value="CDP-diacylglycerol--glycerol-3-phosphate 3-phosphatidyltransferase"/>
    <property type="match status" value="1"/>
</dbReference>
<dbReference type="Gene3D" id="3.30.870.10">
    <property type="entry name" value="Endonuclease Chain A"/>
    <property type="match status" value="2"/>
</dbReference>
<dbReference type="InterPro" id="IPR016270">
    <property type="entry name" value="PGS1"/>
</dbReference>
<dbReference type="InterPro" id="IPR001736">
    <property type="entry name" value="PLipase_D/transphosphatidylase"/>
</dbReference>
<dbReference type="PANTHER" id="PTHR12586:SF1">
    <property type="entry name" value="CDP-DIACYLGLYCEROL--GLYCEROL-3-PHOSPHATE 3-PHOSPHATIDYLTRANSFERASE, MITOCHONDRIAL"/>
    <property type="match status" value="1"/>
</dbReference>
<dbReference type="PANTHER" id="PTHR12586">
    <property type="entry name" value="CDP-DIACYLGLYCEROL--SERINE O-PHOSPHATIDYLTRANSFERASE"/>
    <property type="match status" value="1"/>
</dbReference>
<dbReference type="PIRSF" id="PIRSF000850">
    <property type="entry name" value="Phospholipase_D_PSS"/>
    <property type="match status" value="1"/>
</dbReference>
<dbReference type="SUPFAM" id="SSF56024">
    <property type="entry name" value="Phospholipase D/nuclease"/>
    <property type="match status" value="2"/>
</dbReference>
<dbReference type="PROSITE" id="PS50035">
    <property type="entry name" value="PLD"/>
    <property type="match status" value="1"/>
</dbReference>
<name>PGPS1_PONAB</name>